<organism>
    <name type="scientific">Halobacterium salinarum (strain ATCC 700922 / JCM 11081 / NRC-1)</name>
    <name type="common">Halobacterium halobium</name>
    <dbReference type="NCBI Taxonomy" id="64091"/>
    <lineage>
        <taxon>Archaea</taxon>
        <taxon>Methanobacteriati</taxon>
        <taxon>Methanobacteriota</taxon>
        <taxon>Stenosarchaea group</taxon>
        <taxon>Halobacteria</taxon>
        <taxon>Halobacteriales</taxon>
        <taxon>Halobacteriaceae</taxon>
        <taxon>Halobacterium</taxon>
        <taxon>Halobacterium salinarum NRC-34001</taxon>
    </lineage>
</organism>
<name>GVPC1_HALSA</name>
<evidence type="ECO:0000256" key="1">
    <source>
        <dbReference type="SAM" id="MobiDB-lite"/>
    </source>
</evidence>
<evidence type="ECO:0000269" key="2">
    <source>
    </source>
</evidence>
<evidence type="ECO:0000269" key="3">
    <source>
    </source>
</evidence>
<evidence type="ECO:0000269" key="4">
    <source>
    </source>
</evidence>
<evidence type="ECO:0000269" key="5">
    <source>
    </source>
</evidence>
<evidence type="ECO:0000269" key="6">
    <source>
    </source>
</evidence>
<evidence type="ECO:0000269" key="7">
    <source>
    </source>
</evidence>
<evidence type="ECO:0000269" key="8">
    <source>
    </source>
</evidence>
<evidence type="ECO:0000269" key="9">
    <source>
    </source>
</evidence>
<evidence type="ECO:0000269" key="10">
    <source>
    </source>
</evidence>
<evidence type="ECO:0000269" key="11">
    <source>
    </source>
</evidence>
<evidence type="ECO:0000269" key="12">
    <source>
    </source>
</evidence>
<evidence type="ECO:0000269" key="13">
    <source>
    </source>
</evidence>
<evidence type="ECO:0000269" key="14">
    <source>
    </source>
</evidence>
<evidence type="ECO:0000269" key="15">
    <source>
    </source>
</evidence>
<evidence type="ECO:0000269" key="16">
    <source>
    </source>
</evidence>
<evidence type="ECO:0000269" key="17">
    <source>
    </source>
</evidence>
<evidence type="ECO:0000303" key="18">
    <source>
    </source>
</evidence>
<evidence type="ECO:0000303" key="19">
    <source>
    </source>
</evidence>
<evidence type="ECO:0000303" key="20">
    <source>
    </source>
</evidence>
<evidence type="ECO:0000305" key="21"/>
<evidence type="ECO:0000305" key="22">
    <source>
    </source>
</evidence>
<evidence type="ECO:0000305" key="23">
    <source>
    </source>
</evidence>
<evidence type="ECO:0000305" key="24">
    <source>
    </source>
</evidence>
<evidence type="ECO:0000305" key="25">
    <source>
    </source>
</evidence>
<evidence type="ECO:0000305" key="26">
    <source>
    </source>
</evidence>
<evidence type="ECO:0000305" key="27">
    <source>
    </source>
</evidence>
<evidence type="ECO:0000305" key="28">
    <source>
    </source>
</evidence>
<evidence type="ECO:0000312" key="29">
    <source>
        <dbReference type="EMBL" id="AAA98197.1"/>
    </source>
</evidence>
<evidence type="ECO:0000312" key="30">
    <source>
        <dbReference type="EMBL" id="AAG20727.1"/>
    </source>
</evidence>
<evidence type="ECO:0000312" key="31">
    <source>
        <dbReference type="EMBL" id="CAA40451.1"/>
    </source>
</evidence>
<keyword id="KW-0963">Cytoplasm</keyword>
<keyword id="KW-0304">Gas vesicle</keyword>
<keyword id="KW-0614">Plasmid</keyword>
<keyword id="KW-1185">Reference proteome</keyword>
<keyword id="KW-0677">Repeat</keyword>
<reference evidence="29" key="1">
    <citation type="journal article" date="1991" name="Gene">
        <title>Structure and organization of the gas vesicle gene cluster on the Halobacterium halobium plasmid pNRC100.</title>
        <authorList>
            <person name="Jones J.G."/>
            <person name="Young D.C."/>
            <person name="Dassarma S."/>
        </authorList>
    </citation>
    <scope>NUCLEOTIDE SEQUENCE [GENOMIC DNA]</scope>
    <scope>REPEATS</scope>
    <source>
        <strain>ATCC 700922 / JCM 11081 / NRC-1</strain>
        <plasmid>pNRC100</plasmid>
    </source>
</reference>
<reference evidence="31" key="2">
    <citation type="journal article" date="1991" name="Mol. Microbiol.">
        <title>A DNA region of 9 kbp contains all genes necessary for gas vesicle synthesis in halophilic archaebacteria.</title>
        <authorList>
            <person name="Horne M."/>
            <person name="Englert C."/>
            <person name="Wimmer C."/>
            <person name="Pfeifer F."/>
        </authorList>
    </citation>
    <scope>NUCLEOTIDE SEQUENCE [GENOMIC DNA]</scope>
    <scope>INDUCTION</scope>
    <scope>REPEATS</scope>
    <source>
        <strain>NRC-817</strain>
        <plasmid>pHH1</plasmid>
    </source>
</reference>
<reference key="3">
    <citation type="journal article" date="1992" name="J. Mol. Biol.">
        <title>Three different but related gene clusters encoding gas vesicles in halophilic archaea.</title>
        <authorList>
            <person name="Englert C."/>
            <person name="Krueger K."/>
            <person name="Offner S."/>
            <person name="Pfeifer F."/>
        </authorList>
    </citation>
    <scope>NUCLEOTIDE SEQUENCE [GENOMIC DNA]</scope>
    <scope>GAS VESICLE GENE CLUSTER</scope>
    <source>
        <strain>NRC-817</strain>
        <plasmid>pHH1</plasmid>
    </source>
</reference>
<reference key="4">
    <citation type="journal article" date="1998" name="Genome Res.">
        <title>Snapshot of a large dynamic replicon in a halophilic archaeon: megaplasmid or minichromosome?</title>
        <authorList>
            <person name="Ng W.V."/>
            <person name="Ciufo S.A."/>
            <person name="Smith T.M."/>
            <person name="Bumgarner R.E."/>
            <person name="Baskin D."/>
            <person name="Faust J."/>
            <person name="Hall B."/>
            <person name="Loretz C."/>
            <person name="Seto J."/>
            <person name="Slagel J."/>
            <person name="Hood L."/>
            <person name="DasSarma S."/>
        </authorList>
    </citation>
    <scope>NUCLEOTIDE SEQUENCE [LARGE SCALE GENOMIC DNA]</scope>
    <source>
        <strain>ATCC 700922 / JCM 11081 / NRC-1</strain>
        <plasmid>pNRC100</plasmid>
    </source>
</reference>
<reference evidence="30" key="5">
    <citation type="journal article" date="2000" name="Proc. Natl. Acad. Sci. U.S.A.">
        <title>Genome sequence of Halobacterium species NRC-1.</title>
        <authorList>
            <person name="Ng W.V."/>
            <person name="Kennedy S.P."/>
            <person name="Mahairas G.G."/>
            <person name="Berquist B."/>
            <person name="Pan M."/>
            <person name="Shukla H.D."/>
            <person name="Lasky S.R."/>
            <person name="Baliga N.S."/>
            <person name="Thorsson V."/>
            <person name="Sbrogna J."/>
            <person name="Swartzell S."/>
            <person name="Weir D."/>
            <person name="Hall J."/>
            <person name="Dahl T.A."/>
            <person name="Welti R."/>
            <person name="Goo Y.A."/>
            <person name="Leithauser B."/>
            <person name="Keller K."/>
            <person name="Cruz R."/>
            <person name="Danson M.J."/>
            <person name="Hough D.W."/>
            <person name="Maddocks D.G."/>
            <person name="Jablonski P.E."/>
            <person name="Krebs M.P."/>
            <person name="Angevine C.M."/>
            <person name="Dale H."/>
            <person name="Isenbarger T.A."/>
            <person name="Peck R.F."/>
            <person name="Pohlschroder M."/>
            <person name="Spudich J.L."/>
            <person name="Jung K.-H."/>
            <person name="Alam M."/>
            <person name="Freitas T."/>
            <person name="Hou S."/>
            <person name="Daniels C.J."/>
            <person name="Dennis P.P."/>
            <person name="Omer A.D."/>
            <person name="Ebhardt H."/>
            <person name="Lowe T.M."/>
            <person name="Liang P."/>
            <person name="Riley M."/>
            <person name="Hood L."/>
            <person name="DasSarma S."/>
        </authorList>
    </citation>
    <scope>NUCLEOTIDE SEQUENCE [LARGE SCALE GENOMIC DNA]</scope>
    <source>
        <strain>ATCC 700922 / JCM 11081 / NRC-1</strain>
        <plasmid>pNRC200</plasmid>
    </source>
</reference>
<reference key="6">
    <citation type="journal article" date="1992" name="Gene">
        <title>Genetic transformation of a halophilic archaebacterium with a gas vesicle gene cluster restores its ability to float.</title>
        <authorList>
            <person name="Halladay J.T."/>
            <person name="Ng W.L."/>
            <person name="DasSarma S."/>
        </authorList>
    </citation>
    <scope>FUNCTION</scope>
    <scope>GAS VESICLE PRODUCTION</scope>
    <source>
        <strain>ATCC 700922 / JCM 11081 / NRC-1</strain>
        <plasmid>pNRC100</plasmid>
    </source>
</reference>
<reference key="7">
    <citation type="journal article" date="1993" name="J. Bacteriol.">
        <title>The rightward gas vesicle operon in Halobacterium plasmid pNRC100: identification of the gvpA and gvpC gene products by use of antibody probes and genetic analysis of the region downstream of gvpC.</title>
        <authorList>
            <person name="Halladay J.T."/>
            <person name="Jones J.G."/>
            <person name="Lin F."/>
            <person name="Macdonald A.B."/>
            <person name="Dassarma S."/>
        </authorList>
    </citation>
    <scope>SUBCELLULAR LOCATION</scope>
    <scope>INDUCTION</scope>
    <source>
        <strain>ATCC 700922 / JCM 11081 / NRC-1</strain>
        <plasmid>pNRC100</plasmid>
    </source>
</reference>
<reference key="8">
    <citation type="journal article" date="1994" name="J. Bacteriol.">
        <title>Wild-type gas vesicle formation requires at least ten genes in the gvp gene cluster of Halobacterium halobium plasmid pNRC100.</title>
        <authorList>
            <person name="DasSarma S."/>
            <person name="Arora P."/>
            <person name="Lin F."/>
            <person name="Molinari E."/>
            <person name="Yin L.R."/>
        </authorList>
    </citation>
    <scope>DISRUPTION PHENOTYPE</scope>
    <source>
        <strain>ATCC 700922 / JCM 11081 / NRC-1</strain>
        <plasmid>pNRC100</plasmid>
    </source>
</reference>
<reference key="9">
    <citation type="journal article" date="1995" name="Mol. Microbiol.">
        <title>Complementation studies with the gas vesicle-encoding p-vac region of Halobacterium salinarium PHH1 reveal a regulatory role for the p-gvpDE genes.</title>
        <authorList>
            <person name="Offner S."/>
            <person name="Pfeifer F."/>
        </authorList>
    </citation>
    <scope>FUNCTION</scope>
    <source>
        <strain>PHH1</strain>
    </source>
</reference>
<reference key="10">
    <citation type="journal article" date="1996" name="J. Bacteriol.">
        <title>Functional studies of the gvpACNO operon of Halobacterium salinarium reveal that the GvpC protein shapes gas vesicles.</title>
        <authorList>
            <person name="Offner S."/>
            <person name="Wanner G."/>
            <person name="Pfeifer F."/>
        </authorList>
    </citation>
    <scope>FUNCTION</scope>
    <scope>DISRUPTION PHENOTYPE</scope>
    <source>
        <strain>PHH1</strain>
    </source>
</reference>
<reference key="11">
    <citation type="journal article" date="1997" name="Microbiology">
        <title>Growth competition between Halobacterium salinarium strain PHH1 and mutants affected in gas vesicle synthesis.</title>
        <authorList>
            <person name="Beard S.J."/>
            <person name="Hayes P.K."/>
            <person name="Walsby A.E."/>
        </authorList>
    </citation>
    <scope>FUNCTION IN BUOYANCY</scope>
    <scope>POSSIBLE INDUCTION BY OXYGEN LIMITATION</scope>
    <source>
        <strain>PHH1</strain>
    </source>
</reference>
<reference key="12">
    <citation type="journal article" date="2000" name="J. Bacteriol.">
        <title>Eight of fourteen gvp genes are sufficient for formation of gas vesicles in halophilic archaea.</title>
        <authorList>
            <person name="Offner S."/>
            <person name="Hofacker A."/>
            <person name="Wanner G."/>
            <person name="Pfeifer F."/>
        </authorList>
    </citation>
    <scope>DISRUPTION PHENOTYPE</scope>
    <source>
        <strain>PHH1</strain>
        <plasmid>pHH1</plasmid>
    </source>
</reference>
<reference key="13">
    <citation type="journal article" date="2001" name="J. Biotechnol.">
        <title>Antigen presentation using novel particulate organelles from halophilic archaea.</title>
        <authorList>
            <person name="Stuart E.S."/>
            <person name="Morshed F."/>
            <person name="Sremac M."/>
            <person name="DasSarma S."/>
        </authorList>
    </citation>
    <scope>SUBCELLULAR LOCATION</scope>
    <scope>BIOTECHNOLOGY (EPITOPE DISPLAY)</scope>
</reference>
<reference key="14">
    <citation type="journal article" date="2004" name="J. Biotechnol.">
        <title>Cassette-based presentation of SIV epitopes with recombinant gas vesicles from halophilic archaea.</title>
        <authorList>
            <person name="Stuart E.S."/>
            <person name="Morshed F."/>
            <person name="Sremac M."/>
            <person name="DasSarma S."/>
        </authorList>
    </citation>
    <scope>SUBCELLULAR LOCATION</scope>
    <scope>BIOTECHNOLOGY (SIV VACCINE POTENTIAL)</scope>
</reference>
<reference key="15">
    <citation type="journal article" date="2011" name="J. Proteome Res.">
        <title>New structural proteins of Halobacterium salinarum gas vesicle revealed by comparative proteomics analysis.</title>
        <authorList>
            <person name="Chu L.J."/>
            <person name="Chen M.C."/>
            <person name="Setter J."/>
            <person name="Tsai Y.S."/>
            <person name="Yang H."/>
            <person name="Fang X."/>
            <person name="Ting Y.S."/>
            <person name="Shaffer S.A."/>
            <person name="Taylor G.K."/>
            <person name="von Haller P.D."/>
            <person name="Goodlett D.R."/>
            <person name="Ng W.V."/>
        </authorList>
    </citation>
    <scope>SUBCELLULAR LOCATION</scope>
    <scope>IDENTIFICATION BY MASS SPECTROMETRY</scope>
    <source>
        <strain>ATCC 700922 / JCM 11081 / NRC-1</strain>
    </source>
</reference>
<reference key="16">
    <citation type="journal article" date="2022" name="Front. Microbiol.">
        <title>Interaction of the gas vesicle proteins GvpA, GvpC, GvpN, and GvpO of Halobacterium salinarum.</title>
        <authorList>
            <person name="Jost A."/>
            <person name="Pfeifer F."/>
        </authorList>
    </citation>
    <scope>SUBUNIT</scope>
    <source>
        <strain>PHH1</strain>
        <plasmid>pHH1</plasmid>
    </source>
</reference>
<reference key="17">
    <citation type="journal article" date="2012" name="Vaccine">
        <title>In vitro assessment of halobacterial gas vesicles as a Chlamydia vaccine display and delivery system.</title>
        <authorList>
            <person name="Childs T.S."/>
            <person name="Webley W.C."/>
        </authorList>
    </citation>
    <scope>SUBCELLULAR LOCATION</scope>
    <scope>BIOTECHNOLOGY (CHLAMYDIA VACCINE POTENTIAL)</scope>
</reference>
<reference key="18">
    <citation type="journal article" date="2015" name="Malar. J.">
        <title>Immunogenicity and protective potential of a Plasmodium spp. enolase peptide displayed on archaeal gas vesicle nanoparticles.</title>
        <authorList>
            <person name="Dutta S."/>
            <person name="DasSarma P."/>
            <person name="DasSarma S."/>
            <person name="Jarori G.K."/>
        </authorList>
    </citation>
    <scope>SUBCELLULAR LOCATION</scope>
    <scope>BIOTECHNOLOGY (PLASMODIUM VACCINE POTENTIAL)</scope>
</reference>
<reference key="19">
    <citation type="journal article" date="2016" name="Sci. Rep.">
        <title>Halobacterial nano vesicles displaying murine bactericidal permeability-increasing protein rescue mice from lethal endotoxic shock.</title>
        <authorList>
            <person name="Balakrishnan A."/>
            <person name="DasSarma P."/>
            <person name="Bhattacharjee O."/>
            <person name="Kim J.M."/>
            <person name="DasSarma S."/>
            <person name="Chakravortty D."/>
        </authorList>
    </citation>
    <scope>SUBCELLULAR LOCATION</scope>
    <scope>BIOTECHNOLOGY (ENDOTOXIC SHOCK TREATMENT)</scope>
</reference>
<gene>
    <name type="primary">gvpC1</name>
    <name evidence="19" type="synonym">gvpC</name>
    <name evidence="18" type="synonym">p-gvpC</name>
    <name type="ordered locus">VNG_5032G</name>
</gene>
<gene>
    <name evidence="30" type="primary">gvpC2</name>
    <name evidence="30" type="ordered locus">VNG_6031G</name>
</gene>
<accession>P24574</accession>
<accession>Q9HI17</accession>
<proteinExistence type="evidence at protein level"/>
<comment type="function">
    <text evidence="12 17">Confers stability, involved in shaping gas vesicles (PubMed:8606186). Gas vesicles are hollow, gas filled proteinaceous nanostructures found in several microbial planktonic microorganisms. They allow positioning of halobacteria at the optimal depth for growth in the poorly aerated, shallow brine pools of their habitat (PubMed:33711860).</text>
</comment>
<comment type="function">
    <text evidence="2 4 5 14 15 16">Expression of a 9.5 kb p-vac DNA fragment containing 2 divergently transcribed regions (gvpD-gvpE-gvpF-gvpG-gvpH-gvpI-gvpJ-gvpK-gvpL-gvpM and gvpA-gvpC-gvpN-gvpO) allows H.volcanii to produce gas vesicles (PubMed:10894744, PubMed:1404376, PubMed:7651141). A similar region restores gas vesicle production in H.halobium without the p-vac locus, but it still has the c-vac locus (PubMed:1398080, PubMed:8002589, PubMed:8423144).</text>
</comment>
<comment type="subunit">
    <text evidence="13">Forms homodimers, interacts with GvpF1, GvpH1, GvpI1, GvpL1, GvpN1 and GvpO1 via its C-terminus (residues 329-382).</text>
</comment>
<comment type="subcellular location">
    <subcellularLocation>
        <location evidence="6 8 16">Gas vesicle</location>
    </subcellularLocation>
    <subcellularLocation>
        <location evidence="25">Cytoplasm</location>
    </subcellularLocation>
    <text evidence="22 26 27 28">Binds to the external surface of the gas vesicle (PubMed:15522433, PubMed:22846397, PubMed:26463341, PubMed:27646594).</text>
</comment>
<comment type="induction">
    <text evidence="7 12 16">Maximally transcribed in late log phase, probably part of a gvpC1-gvpN1 operon (PubMed:1956294). Also part of a gvpA-gvpC-gvpN operon (PubMed:8423144). Gas vesicles appear earlier when grown in static culture, possibly due to O(2)-limitation (PubMed:33711860).</text>
</comment>
<comment type="disruption phenotype">
    <text evidence="2 15 17">Many small variable-shape gas vesicles, in situ (PubMed:8002589). Makes increased amounts of gas vesicles, their shape is highly variable, in H.volcanii (PubMed:10894744, PubMed:8606186).</text>
</comment>
<comment type="biotechnology">
    <text evidence="3 6 9 10">Can be used for presentation of peptidyl epitopes in the mammalian immune system. Modification of this protein to include a 6 residue epitope elicts strong antibody responses without the injection of extra adjuvant (PubMed:11403846). An insert carrying 168 amino acids of gag from simian immunodeficiency virus in this protein evoked a long-lived immune response and immunologic memory (IgG) in the absence of additional adjuvant when injected into mice, suggesting it has the potential to be used for vaccine production (PubMed:15522433). In experiments with inserts of C.trachomatis proteins (MOMP, OmcB and PompD) pooled human immune sera from patients recognizes the GVs with C.trachomatis inserts. Incubation of macrophages with these GVs shows a slow timed release and presentation of Chlamydia peptides near the cell surface, as well as induced expression of pro-inflammatory cytokines, in the absence of additional adjuvant (PubMed:22846397). Insertion of an epitope of Plasmodium enolase (eno) in this protein inhibited parasite growth in immunized mice, resulting in diminished parasitaemia and enhanced survival. In this study GVs were injected with Freund's adjuvant (PubMed:26463341).</text>
</comment>
<comment type="biotechnology">
    <text evidence="11">Fusion of mouse bactericidal permeability-increasing protein (Bpi, the first 199 residues) with GvpC increases survival in mice against LPS-induced endotoxic shock if administered before bacterial infection. Mice have fewer symptoms of inflammation.</text>
</comment>
<comment type="miscellaneous">
    <text evidence="5 7 12">Encoded in a 14-gene plasmid locus called p-vac which produces predominantly short, spindle-shaped gas vesicles during all stages of growth.</text>
</comment>
<comment type="similarity">
    <text evidence="21">Belongs to the halobacterial gas vesicle GvpC family.</text>
</comment>
<protein>
    <recommendedName>
        <fullName evidence="20">Gas vesicle protein C1</fullName>
        <shortName evidence="20">GvpC1</shortName>
    </recommendedName>
</protein>
<feature type="chain" id="PRO_0000182672" description="Gas vesicle protein C1">
    <location>
        <begin position="1"/>
        <end position="382"/>
    </location>
</feature>
<feature type="repeat" description="1" evidence="23 24">
    <location>
        <begin position="22"/>
        <end position="60"/>
    </location>
</feature>
<feature type="repeat" description="2" evidence="23 24">
    <location>
        <begin position="61"/>
        <end position="92"/>
    </location>
</feature>
<feature type="repeat" description="3" evidence="23 24">
    <location>
        <begin position="93"/>
        <end position="130"/>
    </location>
</feature>
<feature type="repeat" description="4" evidence="23 24">
    <location>
        <begin position="131"/>
        <end position="168"/>
    </location>
</feature>
<feature type="repeat" description="5" evidence="23 24">
    <location>
        <begin position="169"/>
        <end position="200"/>
    </location>
</feature>
<feature type="repeat" description="6" evidence="23 24">
    <location>
        <begin position="201"/>
        <end position="240"/>
    </location>
</feature>
<feature type="repeat" description="7" evidence="23 24">
    <location>
        <begin position="241"/>
        <end position="284"/>
    </location>
</feature>
<feature type="region of interest" description="Disordered" evidence="1">
    <location>
        <begin position="1"/>
        <end position="21"/>
    </location>
</feature>
<feature type="region of interest" description="7 X approximate tandem repeats" evidence="23 24">
    <location>
        <begin position="22"/>
        <end position="284"/>
    </location>
</feature>
<feature type="region of interest" description="Disordered" evidence="1">
    <location>
        <begin position="260"/>
        <end position="382"/>
    </location>
</feature>
<feature type="compositionally biased region" description="Basic and acidic residues" evidence="1">
    <location>
        <begin position="1"/>
        <end position="18"/>
    </location>
</feature>
<feature type="compositionally biased region" description="Acidic residues" evidence="1">
    <location>
        <begin position="260"/>
        <end position="302"/>
    </location>
</feature>
<feature type="compositionally biased region" description="Low complexity" evidence="1">
    <location>
        <begin position="303"/>
        <end position="316"/>
    </location>
</feature>
<feature type="compositionally biased region" description="Acidic residues" evidence="1">
    <location>
        <begin position="317"/>
        <end position="336"/>
    </location>
</feature>
<feature type="compositionally biased region" description="Basic and acidic residues" evidence="1">
    <location>
        <begin position="365"/>
        <end position="382"/>
    </location>
</feature>
<sequence>MSVTDKRDEMSTARDKFAESQQEFESYADEFAADITAKQDDVSDLVDAITDFQAEMTNTTDAFHTYGDEFAAEVDHLRADIDAQRDVIREMQDAFEAYADIFATDIADKQDIGNLLAAIEALRTEMNSTHGAFEAYADDFAADVAALRDISDLVAAIDDFQEEFIAVQDAFDNYAGDFDAEIDQLHAAIADQHDSFDATADAFAEYRDEFYRIEVEALLEAINDFQQDIGDFRAEFETTEDAFVAFARDFYGHEITAEEGAAEAEAEPVEADADVEAEAEVSPDEAGGESAGTEEEETEPAEVETAAPEVEGSPADTADEAEDTEAEEETEEEAPEDMVQCRVCGEYYQAITEPHLQTHDMTIQEYRDEYGEDVPLRPDDKT</sequence>
<dbReference type="EMBL" id="M58557">
    <property type="protein sequence ID" value="AAA98197.1"/>
    <property type="molecule type" value="Genomic_DNA"/>
</dbReference>
<dbReference type="EMBL" id="X57161">
    <property type="protein sequence ID" value="CAA40451.1"/>
    <property type="molecule type" value="Genomic_DNA"/>
</dbReference>
<dbReference type="EMBL" id="X64729">
    <property type="protein sequence ID" value="CAA45981.1"/>
    <property type="molecule type" value="Genomic_DNA"/>
</dbReference>
<dbReference type="EMBL" id="AF016485">
    <property type="protein sequence ID" value="AAC82810.1"/>
    <property type="molecule type" value="Genomic_DNA"/>
</dbReference>
<dbReference type="EMBL" id="AE004438">
    <property type="protein sequence ID" value="AAG20727.1"/>
    <property type="molecule type" value="Genomic_DNA"/>
</dbReference>
<dbReference type="PIR" id="T08243">
    <property type="entry name" value="T08243"/>
</dbReference>
<dbReference type="RefSeq" id="WP_010890518.1">
    <property type="nucleotide sequence ID" value="NC_001869.1"/>
</dbReference>
<dbReference type="SMR" id="P24574"/>
<dbReference type="GeneID" id="5954616"/>
<dbReference type="KEGG" id="hal:gvpC"/>
<dbReference type="KEGG" id="hal:VNG_6031G"/>
<dbReference type="PATRIC" id="fig|64091.14.peg.2100"/>
<dbReference type="HOGENOM" id="CLU_060058_0_0_2"/>
<dbReference type="InParanoid" id="P24574"/>
<dbReference type="OrthoDB" id="275706at2157"/>
<dbReference type="PhylomeDB" id="P24574"/>
<dbReference type="Proteomes" id="UP000000554">
    <property type="component" value="Plasmid pNRC100"/>
</dbReference>
<dbReference type="Proteomes" id="UP000000554">
    <property type="component" value="Plasmid pNRC200"/>
</dbReference>
<dbReference type="GO" id="GO:0005737">
    <property type="term" value="C:cytoplasm"/>
    <property type="evidence" value="ECO:0007669"/>
    <property type="project" value="UniProtKB-SubCell"/>
</dbReference>
<dbReference type="GO" id="GO:0031411">
    <property type="term" value="C:gas vesicle"/>
    <property type="evidence" value="ECO:0007669"/>
    <property type="project" value="UniProtKB-SubCell"/>
</dbReference>
<dbReference type="GO" id="GO:0003677">
    <property type="term" value="F:DNA binding"/>
    <property type="evidence" value="ECO:0007669"/>
    <property type="project" value="InterPro"/>
</dbReference>
<dbReference type="GO" id="GO:0008270">
    <property type="term" value="F:zinc ion binding"/>
    <property type="evidence" value="ECO:0007669"/>
    <property type="project" value="InterPro"/>
</dbReference>
<dbReference type="GO" id="GO:0031412">
    <property type="term" value="P:gas vesicle organization"/>
    <property type="evidence" value="ECO:0007669"/>
    <property type="project" value="InterPro"/>
</dbReference>
<dbReference type="GO" id="GO:0006355">
    <property type="term" value="P:regulation of DNA-templated transcription"/>
    <property type="evidence" value="ECO:0007669"/>
    <property type="project" value="InterPro"/>
</dbReference>
<dbReference type="Gene3D" id="1.20.1170.10">
    <property type="match status" value="1"/>
</dbReference>
<dbReference type="Gene3D" id="1.10.10.1550">
    <property type="entry name" value="ROS/MUCR transcriptional regulator protein"/>
    <property type="match status" value="1"/>
</dbReference>
<dbReference type="InterPro" id="IPR008639">
    <property type="entry name" value="Gas-vesicle_GvpC_halobac"/>
</dbReference>
<dbReference type="InterPro" id="IPR041920">
    <property type="entry name" value="ROS/MUCR_sf"/>
</dbReference>
<dbReference type="InterPro" id="IPR008807">
    <property type="entry name" value="ROS_MUCR"/>
</dbReference>
<dbReference type="Pfam" id="PF05465">
    <property type="entry name" value="Halo_GVPC"/>
    <property type="match status" value="7"/>
</dbReference>
<dbReference type="Pfam" id="PF05443">
    <property type="entry name" value="ROS_MUCR"/>
    <property type="match status" value="1"/>
</dbReference>
<dbReference type="SUPFAM" id="SSF58100">
    <property type="entry name" value="Bacterial hemolysins"/>
    <property type="match status" value="1"/>
</dbReference>
<geneLocation type="plasmid">
    <name>pNRC100</name>
</geneLocation>
<geneLocation type="plasmid">
    <name>pNRC200</name>
</geneLocation>
<geneLocation type="plasmid">
    <name>pHH1</name>
</geneLocation>